<protein>
    <recommendedName>
        <fullName evidence="1">Large ribosomal subunit protein uL22</fullName>
    </recommendedName>
    <alternativeName>
        <fullName evidence="2">50S ribosomal protein L22</fullName>
    </alternativeName>
</protein>
<comment type="function">
    <text evidence="1">This protein binds specifically to 23S rRNA; its binding is stimulated by other ribosomal proteins, e.g. L4, L17, and L20. It is important during the early stages of 50S assembly. It makes multiple contacts with different domains of the 23S rRNA in the assembled 50S subunit and ribosome (By similarity).</text>
</comment>
<comment type="function">
    <text evidence="1">The globular domain of the protein is located near the polypeptide exit tunnel on the outside of the subunit, while an extended beta-hairpin is found that lines the wall of the exit tunnel in the center of the 70S ribosome.</text>
</comment>
<comment type="subunit">
    <text evidence="1">Part of the 50S ribosomal subunit.</text>
</comment>
<comment type="similarity">
    <text evidence="1">Belongs to the universal ribosomal protein uL22 family.</text>
</comment>
<evidence type="ECO:0000255" key="1">
    <source>
        <dbReference type="HAMAP-Rule" id="MF_01331"/>
    </source>
</evidence>
<evidence type="ECO:0000305" key="2"/>
<keyword id="KW-1185">Reference proteome</keyword>
<keyword id="KW-0687">Ribonucleoprotein</keyword>
<keyword id="KW-0689">Ribosomal protein</keyword>
<keyword id="KW-0694">RNA-binding</keyword>
<keyword id="KW-0699">rRNA-binding</keyword>
<sequence>MTERTGYRATTKFLIASPTKVRPVANVVKNKPYPEAMAILENMPQKGAVLISQTMKSAASNALYKNKQLDEDMLFVKEIMIDEGPRLKRIWCRGKGRADILLKRMCHITVVVDERAGE</sequence>
<name>RL22_TREDE</name>
<dbReference type="EMBL" id="AE017226">
    <property type="protein sequence ID" value="AAS11263.1"/>
    <property type="molecule type" value="Genomic_DNA"/>
</dbReference>
<dbReference type="RefSeq" id="NP_971382.1">
    <property type="nucleotide sequence ID" value="NC_002967.9"/>
</dbReference>
<dbReference type="SMR" id="Q73PM7"/>
<dbReference type="STRING" id="243275.TDE_0772"/>
<dbReference type="PaxDb" id="243275-TDE_0772"/>
<dbReference type="KEGG" id="tde:TDE_0772"/>
<dbReference type="PATRIC" id="fig|243275.7.peg.745"/>
<dbReference type="eggNOG" id="COG0091">
    <property type="taxonomic scope" value="Bacteria"/>
</dbReference>
<dbReference type="HOGENOM" id="CLU_083987_3_1_12"/>
<dbReference type="OrthoDB" id="9805969at2"/>
<dbReference type="Proteomes" id="UP000008212">
    <property type="component" value="Chromosome"/>
</dbReference>
<dbReference type="GO" id="GO:0022625">
    <property type="term" value="C:cytosolic large ribosomal subunit"/>
    <property type="evidence" value="ECO:0007669"/>
    <property type="project" value="TreeGrafter"/>
</dbReference>
<dbReference type="GO" id="GO:0019843">
    <property type="term" value="F:rRNA binding"/>
    <property type="evidence" value="ECO:0007669"/>
    <property type="project" value="UniProtKB-UniRule"/>
</dbReference>
<dbReference type="GO" id="GO:0003735">
    <property type="term" value="F:structural constituent of ribosome"/>
    <property type="evidence" value="ECO:0007669"/>
    <property type="project" value="InterPro"/>
</dbReference>
<dbReference type="GO" id="GO:0006412">
    <property type="term" value="P:translation"/>
    <property type="evidence" value="ECO:0007669"/>
    <property type="project" value="UniProtKB-UniRule"/>
</dbReference>
<dbReference type="CDD" id="cd00336">
    <property type="entry name" value="Ribosomal_L22"/>
    <property type="match status" value="1"/>
</dbReference>
<dbReference type="Gene3D" id="3.90.470.10">
    <property type="entry name" value="Ribosomal protein L22/L17"/>
    <property type="match status" value="1"/>
</dbReference>
<dbReference type="HAMAP" id="MF_01331_B">
    <property type="entry name" value="Ribosomal_uL22_B"/>
    <property type="match status" value="1"/>
</dbReference>
<dbReference type="InterPro" id="IPR001063">
    <property type="entry name" value="Ribosomal_uL22"/>
</dbReference>
<dbReference type="InterPro" id="IPR005727">
    <property type="entry name" value="Ribosomal_uL22_bac/chlpt-type"/>
</dbReference>
<dbReference type="InterPro" id="IPR047867">
    <property type="entry name" value="Ribosomal_uL22_bac/org-type"/>
</dbReference>
<dbReference type="InterPro" id="IPR018260">
    <property type="entry name" value="Ribosomal_uL22_CS"/>
</dbReference>
<dbReference type="InterPro" id="IPR036394">
    <property type="entry name" value="Ribosomal_uL22_sf"/>
</dbReference>
<dbReference type="NCBIfam" id="TIGR01044">
    <property type="entry name" value="rplV_bact"/>
    <property type="match status" value="1"/>
</dbReference>
<dbReference type="PANTHER" id="PTHR13501">
    <property type="entry name" value="CHLOROPLAST 50S RIBOSOMAL PROTEIN L22-RELATED"/>
    <property type="match status" value="1"/>
</dbReference>
<dbReference type="PANTHER" id="PTHR13501:SF8">
    <property type="entry name" value="LARGE RIBOSOMAL SUBUNIT PROTEIN UL22M"/>
    <property type="match status" value="1"/>
</dbReference>
<dbReference type="Pfam" id="PF00237">
    <property type="entry name" value="Ribosomal_L22"/>
    <property type="match status" value="1"/>
</dbReference>
<dbReference type="SUPFAM" id="SSF54843">
    <property type="entry name" value="Ribosomal protein L22"/>
    <property type="match status" value="1"/>
</dbReference>
<dbReference type="PROSITE" id="PS00464">
    <property type="entry name" value="RIBOSOMAL_L22"/>
    <property type="match status" value="1"/>
</dbReference>
<reference key="1">
    <citation type="journal article" date="2004" name="Proc. Natl. Acad. Sci. U.S.A.">
        <title>Comparison of the genome of the oral pathogen Treponema denticola with other spirochete genomes.</title>
        <authorList>
            <person name="Seshadri R."/>
            <person name="Myers G.S.A."/>
            <person name="Tettelin H."/>
            <person name="Eisen J.A."/>
            <person name="Heidelberg J.F."/>
            <person name="Dodson R.J."/>
            <person name="Davidsen T.M."/>
            <person name="DeBoy R.T."/>
            <person name="Fouts D.E."/>
            <person name="Haft D.H."/>
            <person name="Selengut J."/>
            <person name="Ren Q."/>
            <person name="Brinkac L.M."/>
            <person name="Madupu R."/>
            <person name="Kolonay J.F."/>
            <person name="Durkin S.A."/>
            <person name="Daugherty S.C."/>
            <person name="Shetty J."/>
            <person name="Shvartsbeyn A."/>
            <person name="Gebregeorgis E."/>
            <person name="Geer K."/>
            <person name="Tsegaye G."/>
            <person name="Malek J.A."/>
            <person name="Ayodeji B."/>
            <person name="Shatsman S."/>
            <person name="McLeod M.P."/>
            <person name="Smajs D."/>
            <person name="Howell J.K."/>
            <person name="Pal S."/>
            <person name="Amin A."/>
            <person name="Vashisth P."/>
            <person name="McNeill T.Z."/>
            <person name="Xiang Q."/>
            <person name="Sodergren E."/>
            <person name="Baca E."/>
            <person name="Weinstock G.M."/>
            <person name="Norris S.J."/>
            <person name="Fraser C.M."/>
            <person name="Paulsen I.T."/>
        </authorList>
    </citation>
    <scope>NUCLEOTIDE SEQUENCE [LARGE SCALE GENOMIC DNA]</scope>
    <source>
        <strain>ATCC 35405 / DSM 14222 / CIP 103919 / JCM 8153 / KCTC 15104</strain>
    </source>
</reference>
<organism>
    <name type="scientific">Treponema denticola (strain ATCC 35405 / DSM 14222 / CIP 103919 / JCM 8153 / KCTC 15104)</name>
    <dbReference type="NCBI Taxonomy" id="243275"/>
    <lineage>
        <taxon>Bacteria</taxon>
        <taxon>Pseudomonadati</taxon>
        <taxon>Spirochaetota</taxon>
        <taxon>Spirochaetia</taxon>
        <taxon>Spirochaetales</taxon>
        <taxon>Treponemataceae</taxon>
        <taxon>Treponema</taxon>
    </lineage>
</organism>
<proteinExistence type="inferred from homology"/>
<accession>Q73PM7</accession>
<feature type="chain" id="PRO_0000125253" description="Large ribosomal subunit protein uL22">
    <location>
        <begin position="1"/>
        <end position="118"/>
    </location>
</feature>
<gene>
    <name evidence="1" type="primary">rplV</name>
    <name type="ordered locus">TDE_0772</name>
</gene>